<reference key="1">
    <citation type="submission" date="2007-06" db="EMBL/GenBank/DDBJ databases">
        <title>Complete sequence of Clostridium beijerinckii NCIMB 8052.</title>
        <authorList>
            <consortium name="US DOE Joint Genome Institute"/>
            <person name="Copeland A."/>
            <person name="Lucas S."/>
            <person name="Lapidus A."/>
            <person name="Barry K."/>
            <person name="Detter J.C."/>
            <person name="Glavina del Rio T."/>
            <person name="Hammon N."/>
            <person name="Israni S."/>
            <person name="Dalin E."/>
            <person name="Tice H."/>
            <person name="Pitluck S."/>
            <person name="Sims D."/>
            <person name="Brettin T."/>
            <person name="Bruce D."/>
            <person name="Tapia R."/>
            <person name="Brainard J."/>
            <person name="Schmutz J."/>
            <person name="Larimer F."/>
            <person name="Land M."/>
            <person name="Hauser L."/>
            <person name="Kyrpides N."/>
            <person name="Mikhailova N."/>
            <person name="Bennet G."/>
            <person name="Cann I."/>
            <person name="Chen J.-S."/>
            <person name="Contreras A.L."/>
            <person name="Jones D."/>
            <person name="Kashket E."/>
            <person name="Mitchell W."/>
            <person name="Stoddard S."/>
            <person name="Schwarz W."/>
            <person name="Qureshi N."/>
            <person name="Young M."/>
            <person name="Shi Z."/>
            <person name="Ezeji T."/>
            <person name="White B."/>
            <person name="Blaschek H."/>
            <person name="Richardson P."/>
        </authorList>
    </citation>
    <scope>NUCLEOTIDE SEQUENCE [LARGE SCALE GENOMIC DNA]</scope>
    <source>
        <strain>ATCC 51743 / NCIMB 8052</strain>
    </source>
</reference>
<keyword id="KW-0963">Cytoplasm</keyword>
<keyword id="KW-0255">Endonuclease</keyword>
<keyword id="KW-0378">Hydrolase</keyword>
<keyword id="KW-0464">Manganese</keyword>
<keyword id="KW-0479">Metal-binding</keyword>
<keyword id="KW-0540">Nuclease</keyword>
<name>RNH2_CLOB8</name>
<gene>
    <name evidence="1" type="primary">rnhB</name>
    <name type="ordered locus">Cbei_1182</name>
</gene>
<feature type="chain" id="PRO_0000334876" description="Ribonuclease HII">
    <location>
        <begin position="1"/>
        <end position="270"/>
    </location>
</feature>
<feature type="domain" description="RNase H type-2" evidence="2">
    <location>
        <begin position="84"/>
        <end position="270"/>
    </location>
</feature>
<feature type="binding site" evidence="1">
    <location>
        <position position="90"/>
    </location>
    <ligand>
        <name>a divalent metal cation</name>
        <dbReference type="ChEBI" id="CHEBI:60240"/>
    </ligand>
</feature>
<feature type="binding site" evidence="1">
    <location>
        <position position="91"/>
    </location>
    <ligand>
        <name>a divalent metal cation</name>
        <dbReference type="ChEBI" id="CHEBI:60240"/>
    </ligand>
</feature>
<feature type="binding site" evidence="1">
    <location>
        <position position="186"/>
    </location>
    <ligand>
        <name>a divalent metal cation</name>
        <dbReference type="ChEBI" id="CHEBI:60240"/>
    </ligand>
</feature>
<sequence>MIQFNEDIRSLSFAEIKEEIHKLSIVDLYRNDEHTKLINWLEEDKRKNVLSLKEKIEKDLESYLNEVKRVKTMYEFDKSFGSYRYIAGVDEVGRGPLAGPIVACSVILDLNVLEKDLILYINDSKKVKEHKREELSEIIKEKALSYQIAVSSNKEIDEKGIAFANNKVFLESCNSLSIKPDLVLSDGYLIKNIGIENKSVIKGDTKSASIAAASIVAKVYRDRLMKEYAKKYPHYDFENNVGYGTSKHIEGLKKYGKSDIHRNSFLTKLL</sequence>
<accession>A6LSN4</accession>
<organism>
    <name type="scientific">Clostridium beijerinckii (strain ATCC 51743 / NCIMB 8052)</name>
    <name type="common">Clostridium acetobutylicum</name>
    <dbReference type="NCBI Taxonomy" id="290402"/>
    <lineage>
        <taxon>Bacteria</taxon>
        <taxon>Bacillati</taxon>
        <taxon>Bacillota</taxon>
        <taxon>Clostridia</taxon>
        <taxon>Eubacteriales</taxon>
        <taxon>Clostridiaceae</taxon>
        <taxon>Clostridium</taxon>
    </lineage>
</organism>
<comment type="function">
    <text evidence="1">Endonuclease that specifically degrades the RNA of RNA-DNA hybrids.</text>
</comment>
<comment type="catalytic activity">
    <reaction evidence="1">
        <text>Endonucleolytic cleavage to 5'-phosphomonoester.</text>
        <dbReference type="EC" id="3.1.26.4"/>
    </reaction>
</comment>
<comment type="cofactor">
    <cofactor evidence="1">
        <name>Mn(2+)</name>
        <dbReference type="ChEBI" id="CHEBI:29035"/>
    </cofactor>
    <cofactor evidence="1">
        <name>Mg(2+)</name>
        <dbReference type="ChEBI" id="CHEBI:18420"/>
    </cofactor>
    <text evidence="1">Manganese or magnesium. Binds 1 divalent metal ion per monomer in the absence of substrate. May bind a second metal ion after substrate binding.</text>
</comment>
<comment type="subcellular location">
    <subcellularLocation>
        <location evidence="1">Cytoplasm</location>
    </subcellularLocation>
</comment>
<comment type="similarity">
    <text evidence="1">Belongs to the RNase HII family.</text>
</comment>
<protein>
    <recommendedName>
        <fullName evidence="1">Ribonuclease HII</fullName>
        <shortName evidence="1">RNase HII</shortName>
        <ecNumber evidence="1">3.1.26.4</ecNumber>
    </recommendedName>
</protein>
<proteinExistence type="inferred from homology"/>
<dbReference type="EC" id="3.1.26.4" evidence="1"/>
<dbReference type="EMBL" id="CP000721">
    <property type="protein sequence ID" value="ABR33364.1"/>
    <property type="molecule type" value="Genomic_DNA"/>
</dbReference>
<dbReference type="RefSeq" id="WP_011968519.1">
    <property type="nucleotide sequence ID" value="NC_009617.1"/>
</dbReference>
<dbReference type="SMR" id="A6LSN4"/>
<dbReference type="KEGG" id="cbe:Cbei_1182"/>
<dbReference type="eggNOG" id="COG0164">
    <property type="taxonomic scope" value="Bacteria"/>
</dbReference>
<dbReference type="HOGENOM" id="CLU_036532_2_1_9"/>
<dbReference type="Proteomes" id="UP000000565">
    <property type="component" value="Chromosome"/>
</dbReference>
<dbReference type="GO" id="GO:0005737">
    <property type="term" value="C:cytoplasm"/>
    <property type="evidence" value="ECO:0007669"/>
    <property type="project" value="UniProtKB-SubCell"/>
</dbReference>
<dbReference type="GO" id="GO:0032299">
    <property type="term" value="C:ribonuclease H2 complex"/>
    <property type="evidence" value="ECO:0007669"/>
    <property type="project" value="TreeGrafter"/>
</dbReference>
<dbReference type="GO" id="GO:0030145">
    <property type="term" value="F:manganese ion binding"/>
    <property type="evidence" value="ECO:0007669"/>
    <property type="project" value="UniProtKB-UniRule"/>
</dbReference>
<dbReference type="GO" id="GO:0003723">
    <property type="term" value="F:RNA binding"/>
    <property type="evidence" value="ECO:0007669"/>
    <property type="project" value="InterPro"/>
</dbReference>
<dbReference type="GO" id="GO:0004523">
    <property type="term" value="F:RNA-DNA hybrid ribonuclease activity"/>
    <property type="evidence" value="ECO:0007669"/>
    <property type="project" value="UniProtKB-UniRule"/>
</dbReference>
<dbReference type="GO" id="GO:0043137">
    <property type="term" value="P:DNA replication, removal of RNA primer"/>
    <property type="evidence" value="ECO:0007669"/>
    <property type="project" value="TreeGrafter"/>
</dbReference>
<dbReference type="GO" id="GO:0006298">
    <property type="term" value="P:mismatch repair"/>
    <property type="evidence" value="ECO:0007669"/>
    <property type="project" value="TreeGrafter"/>
</dbReference>
<dbReference type="CDD" id="cd07182">
    <property type="entry name" value="RNase_HII_bacteria_HII_like"/>
    <property type="match status" value="1"/>
</dbReference>
<dbReference type="Gene3D" id="3.30.420.10">
    <property type="entry name" value="Ribonuclease H-like superfamily/Ribonuclease H"/>
    <property type="match status" value="1"/>
</dbReference>
<dbReference type="HAMAP" id="MF_00052_B">
    <property type="entry name" value="RNase_HII_B"/>
    <property type="match status" value="1"/>
</dbReference>
<dbReference type="InterPro" id="IPR022898">
    <property type="entry name" value="RNase_HII"/>
</dbReference>
<dbReference type="InterPro" id="IPR001352">
    <property type="entry name" value="RNase_HII/HIII"/>
</dbReference>
<dbReference type="InterPro" id="IPR024567">
    <property type="entry name" value="RNase_HII/HIII_dom"/>
</dbReference>
<dbReference type="InterPro" id="IPR012337">
    <property type="entry name" value="RNaseH-like_sf"/>
</dbReference>
<dbReference type="InterPro" id="IPR036397">
    <property type="entry name" value="RNaseH_sf"/>
</dbReference>
<dbReference type="NCBIfam" id="NF000594">
    <property type="entry name" value="PRK00015.1-1"/>
    <property type="match status" value="1"/>
</dbReference>
<dbReference type="NCBIfam" id="NF000595">
    <property type="entry name" value="PRK00015.1-3"/>
    <property type="match status" value="1"/>
</dbReference>
<dbReference type="PANTHER" id="PTHR10954">
    <property type="entry name" value="RIBONUCLEASE H2 SUBUNIT A"/>
    <property type="match status" value="1"/>
</dbReference>
<dbReference type="PANTHER" id="PTHR10954:SF18">
    <property type="entry name" value="RIBONUCLEASE HII"/>
    <property type="match status" value="1"/>
</dbReference>
<dbReference type="Pfam" id="PF01351">
    <property type="entry name" value="RNase_HII"/>
    <property type="match status" value="1"/>
</dbReference>
<dbReference type="SUPFAM" id="SSF53098">
    <property type="entry name" value="Ribonuclease H-like"/>
    <property type="match status" value="1"/>
</dbReference>
<dbReference type="PROSITE" id="PS51975">
    <property type="entry name" value="RNASE_H_2"/>
    <property type="match status" value="1"/>
</dbReference>
<evidence type="ECO:0000255" key="1">
    <source>
        <dbReference type="HAMAP-Rule" id="MF_00052"/>
    </source>
</evidence>
<evidence type="ECO:0000255" key="2">
    <source>
        <dbReference type="PROSITE-ProRule" id="PRU01319"/>
    </source>
</evidence>